<comment type="catalytic activity">
    <reaction>
        <text>L-quinate + NAD(+) = 3-dehydroquinate + NADH + H(+)</text>
        <dbReference type="Rhea" id="RHEA:22364"/>
        <dbReference type="ChEBI" id="CHEBI:15378"/>
        <dbReference type="ChEBI" id="CHEBI:29751"/>
        <dbReference type="ChEBI" id="CHEBI:32364"/>
        <dbReference type="ChEBI" id="CHEBI:57540"/>
        <dbReference type="ChEBI" id="CHEBI:57945"/>
        <dbReference type="EC" id="1.1.1.24"/>
    </reaction>
</comment>
<comment type="pathway">
    <text>Aromatic compound metabolism; 3,4-dihydroxybenzoate biosynthesis; 3-dehydroquinate from D-quinate (NAD(+) route): step 1/1.</text>
</comment>
<sequence length="329" mass="36090">MEPITIPTDRDGVAYLYGHPLRNSLSPPLHQTVYNALGLNWTQIPLSTATGTSFTRSPEISTFLSSVRSNPKFVGSSVTMPWKVAIMPHLDDLTEDARQAGACNTIYLRKEDDGKTQYVGTNTDCIGIREALLQGSPNGAEHFKGKPALIVGGGGTARTAIYVLRKWLGVSKIYIVNRDAKEVEAILAEDKQRNPSPQVALVPVSDPSAAATLEAPVAVVSGIPNYPPQTEEEIRARETLRVFLNRQTHEKDQGVILEMCYHPLPWTDIAQIAQDARWKVILGSEALIWQGLEQARLWTGKDVVSEPGLVEKVQAFVAQTIAERSKSNL</sequence>
<organism>
    <name type="scientific">Emericella nidulans (strain FGSC A4 / ATCC 38163 / CBS 112.46 / NRRL 194 / M139)</name>
    <name type="common">Aspergillus nidulans</name>
    <dbReference type="NCBI Taxonomy" id="227321"/>
    <lineage>
        <taxon>Eukaryota</taxon>
        <taxon>Fungi</taxon>
        <taxon>Dikarya</taxon>
        <taxon>Ascomycota</taxon>
        <taxon>Pezizomycotina</taxon>
        <taxon>Eurotiomycetes</taxon>
        <taxon>Eurotiomycetidae</taxon>
        <taxon>Eurotiales</taxon>
        <taxon>Aspergillaceae</taxon>
        <taxon>Aspergillus</taxon>
        <taxon>Aspergillus subgen. Nidulantes</taxon>
    </lineage>
</organism>
<dbReference type="EC" id="1.1.1.24"/>
<dbReference type="EMBL" id="X13525">
    <property type="protein sequence ID" value="CAA31880.1"/>
    <property type="molecule type" value="Genomic_DNA"/>
</dbReference>
<dbReference type="EMBL" id="AACD01000016">
    <property type="protein sequence ID" value="EAA66255.1"/>
    <property type="molecule type" value="Genomic_DNA"/>
</dbReference>
<dbReference type="EMBL" id="BN001308">
    <property type="protein sequence ID" value="CBF88071.1"/>
    <property type="molecule type" value="Genomic_DNA"/>
</dbReference>
<dbReference type="PIR" id="S08499">
    <property type="entry name" value="S08499"/>
</dbReference>
<dbReference type="RefSeq" id="XP_658741.1">
    <property type="nucleotide sequence ID" value="XM_653649.1"/>
</dbReference>
<dbReference type="SMR" id="P25415"/>
<dbReference type="STRING" id="227321.P25415"/>
<dbReference type="EnsemblFungi" id="CBF88071">
    <property type="protein sequence ID" value="CBF88071"/>
    <property type="gene ID" value="ANIA_01137"/>
</dbReference>
<dbReference type="KEGG" id="ani:ANIA_01137"/>
<dbReference type="VEuPathDB" id="FungiDB:AN1137"/>
<dbReference type="eggNOG" id="KOG0692">
    <property type="taxonomic scope" value="Eukaryota"/>
</dbReference>
<dbReference type="HOGENOM" id="CLU_044063_1_0_1"/>
<dbReference type="InParanoid" id="P25415"/>
<dbReference type="OMA" id="AIYVMRR"/>
<dbReference type="OrthoDB" id="204377at2759"/>
<dbReference type="BioCyc" id="MetaCyc:MONOMER-15333"/>
<dbReference type="UniPathway" id="UPA00088">
    <property type="reaction ID" value="UER00176"/>
</dbReference>
<dbReference type="Proteomes" id="UP000000560">
    <property type="component" value="Chromosome VIII"/>
</dbReference>
<dbReference type="GO" id="GO:0030266">
    <property type="term" value="F:quinate 3-dehydrogenase (NAD+) activity"/>
    <property type="evidence" value="ECO:0000314"/>
    <property type="project" value="AspGD"/>
</dbReference>
<dbReference type="GO" id="GO:0004764">
    <property type="term" value="F:shikimate 3-dehydrogenase (NADP+) activity"/>
    <property type="evidence" value="ECO:0000314"/>
    <property type="project" value="AspGD"/>
</dbReference>
<dbReference type="GO" id="GO:0046279">
    <property type="term" value="P:3,4-dihydroxybenzoate biosynthetic process"/>
    <property type="evidence" value="ECO:0007669"/>
    <property type="project" value="UniProtKB-UniPathway"/>
</dbReference>
<dbReference type="GO" id="GO:0009423">
    <property type="term" value="P:chorismate biosynthetic process"/>
    <property type="evidence" value="ECO:0000318"/>
    <property type="project" value="GO_Central"/>
</dbReference>
<dbReference type="GO" id="GO:0019631">
    <property type="term" value="P:quinate catabolic process"/>
    <property type="evidence" value="ECO:0000314"/>
    <property type="project" value="AspGD"/>
</dbReference>
<dbReference type="GO" id="GO:0019632">
    <property type="term" value="P:shikimate metabolic process"/>
    <property type="evidence" value="ECO:0000318"/>
    <property type="project" value="GO_Central"/>
</dbReference>
<dbReference type="CDD" id="cd01065">
    <property type="entry name" value="NAD_bind_Shikimate_DH"/>
    <property type="match status" value="1"/>
</dbReference>
<dbReference type="FunFam" id="3.40.50.10860:FF:000030">
    <property type="entry name" value="Quinate 5-dehydrogenase QutB"/>
    <property type="match status" value="1"/>
</dbReference>
<dbReference type="FunFam" id="3.40.50.720:FF:000610">
    <property type="entry name" value="Quinate 5-dehydrogenase QutB"/>
    <property type="match status" value="1"/>
</dbReference>
<dbReference type="Gene3D" id="3.40.50.10860">
    <property type="entry name" value="Leucine Dehydrogenase, chain A, domain 1"/>
    <property type="match status" value="1"/>
</dbReference>
<dbReference type="Gene3D" id="3.40.50.720">
    <property type="entry name" value="NAD(P)-binding Rossmann-like Domain"/>
    <property type="match status" value="1"/>
</dbReference>
<dbReference type="InterPro" id="IPR046346">
    <property type="entry name" value="Aminoacid_DH-like_N_sf"/>
</dbReference>
<dbReference type="InterPro" id="IPR036291">
    <property type="entry name" value="NAD(P)-bd_dom_sf"/>
</dbReference>
<dbReference type="InterPro" id="IPR013708">
    <property type="entry name" value="Shikimate_DH-bd_N"/>
</dbReference>
<dbReference type="InterPro" id="IPR022893">
    <property type="entry name" value="Shikimate_DH_fam"/>
</dbReference>
<dbReference type="PANTHER" id="PTHR21089:SF1">
    <property type="entry name" value="BIFUNCTIONAL 3-DEHYDROQUINATE DEHYDRATASE_SHIKIMATE DEHYDROGENASE, CHLOROPLASTIC"/>
    <property type="match status" value="1"/>
</dbReference>
<dbReference type="PANTHER" id="PTHR21089">
    <property type="entry name" value="SHIKIMATE DEHYDROGENASE"/>
    <property type="match status" value="1"/>
</dbReference>
<dbReference type="Pfam" id="PF08501">
    <property type="entry name" value="Shikimate_dh_N"/>
    <property type="match status" value="1"/>
</dbReference>
<dbReference type="SUPFAM" id="SSF53223">
    <property type="entry name" value="Aminoacid dehydrogenase-like, N-terminal domain"/>
    <property type="match status" value="1"/>
</dbReference>
<dbReference type="SUPFAM" id="SSF51735">
    <property type="entry name" value="NAD(P)-binding Rossmann-fold domains"/>
    <property type="match status" value="1"/>
</dbReference>
<proteinExistence type="predicted"/>
<keyword id="KW-0520">NAD</keyword>
<keyword id="KW-0560">Oxidoreductase</keyword>
<keyword id="KW-0672">Quinate metabolism</keyword>
<keyword id="KW-1185">Reference proteome</keyword>
<gene>
    <name type="primary">qutB</name>
    <name type="ORF">AN1137</name>
</gene>
<feature type="chain" id="PRO_0000079892" description="Quinate dehydrogenase">
    <location>
        <begin position="1"/>
        <end position="329"/>
    </location>
</feature>
<feature type="sequence conflict" description="In Ref. 1; EAA66255." evidence="1" ref="1">
    <original>R</original>
    <variation>P</variation>
    <location>
        <position position="22"/>
    </location>
</feature>
<feature type="sequence conflict" description="In Ref. 1; EAA66255." evidence="1" ref="1">
    <original>V</original>
    <variation>L</variation>
    <location>
        <position position="242"/>
    </location>
</feature>
<feature type="sequence conflict" description="In Ref. 1; EAA66255." evidence="1" ref="1">
    <original>L</original>
    <variation>V</variation>
    <location>
        <position position="297"/>
    </location>
</feature>
<reference key="1">
    <citation type="journal article" date="1988" name="Mol. Gen. Genet.">
        <title>Molecular organisation of the quinic acid utilization (QUT) gene cluster in Aspergillus nidulans.</title>
        <authorList>
            <person name="Hawkins A.R."/>
            <person name="Lamb H.K."/>
            <person name="Smith M."/>
            <person name="Keyte J.W."/>
            <person name="Roberts C.F."/>
        </authorList>
    </citation>
    <scope>NUCLEOTIDE SEQUENCE [GENOMIC DNA]</scope>
</reference>
<reference key="2">
    <citation type="journal article" date="2005" name="Nature">
        <title>Sequencing of Aspergillus nidulans and comparative analysis with A. fumigatus and A. oryzae.</title>
        <authorList>
            <person name="Galagan J.E."/>
            <person name="Calvo S.E."/>
            <person name="Cuomo C."/>
            <person name="Ma L.-J."/>
            <person name="Wortman J.R."/>
            <person name="Batzoglou S."/>
            <person name="Lee S.-I."/>
            <person name="Bastuerkmen M."/>
            <person name="Spevak C.C."/>
            <person name="Clutterbuck J."/>
            <person name="Kapitonov V."/>
            <person name="Jurka J."/>
            <person name="Scazzocchio C."/>
            <person name="Farman M.L."/>
            <person name="Butler J."/>
            <person name="Purcell S."/>
            <person name="Harris S."/>
            <person name="Braus G.H."/>
            <person name="Draht O."/>
            <person name="Busch S."/>
            <person name="D'Enfert C."/>
            <person name="Bouchier C."/>
            <person name="Goldman G.H."/>
            <person name="Bell-Pedersen D."/>
            <person name="Griffiths-Jones S."/>
            <person name="Doonan J.H."/>
            <person name="Yu J."/>
            <person name="Vienken K."/>
            <person name="Pain A."/>
            <person name="Freitag M."/>
            <person name="Selker E.U."/>
            <person name="Archer D.B."/>
            <person name="Penalva M.A."/>
            <person name="Oakley B.R."/>
            <person name="Momany M."/>
            <person name="Tanaka T."/>
            <person name="Kumagai T."/>
            <person name="Asai K."/>
            <person name="Machida M."/>
            <person name="Nierman W.C."/>
            <person name="Denning D.W."/>
            <person name="Caddick M.X."/>
            <person name="Hynes M."/>
            <person name="Paoletti M."/>
            <person name="Fischer R."/>
            <person name="Miller B.L."/>
            <person name="Dyer P.S."/>
            <person name="Sachs M.S."/>
            <person name="Osmani S.A."/>
            <person name="Birren B.W."/>
        </authorList>
    </citation>
    <scope>NUCLEOTIDE SEQUENCE [LARGE SCALE GENOMIC DNA]</scope>
    <source>
        <strain>FGSC A4 / ATCC 38163 / CBS 112.46 / NRRL 194 / M139</strain>
    </source>
</reference>
<reference key="3">
    <citation type="journal article" date="2009" name="Fungal Genet. Biol.">
        <title>The 2008 update of the Aspergillus nidulans genome annotation: a community effort.</title>
        <authorList>
            <person name="Wortman J.R."/>
            <person name="Gilsenan J.M."/>
            <person name="Joardar V."/>
            <person name="Deegan J."/>
            <person name="Clutterbuck J."/>
            <person name="Andersen M.R."/>
            <person name="Archer D."/>
            <person name="Bencina M."/>
            <person name="Braus G."/>
            <person name="Coutinho P."/>
            <person name="von Dohren H."/>
            <person name="Doonan J."/>
            <person name="Driessen A.J."/>
            <person name="Durek P."/>
            <person name="Espeso E."/>
            <person name="Fekete E."/>
            <person name="Flipphi M."/>
            <person name="Estrada C.G."/>
            <person name="Geysens S."/>
            <person name="Goldman G."/>
            <person name="de Groot P.W."/>
            <person name="Hansen K."/>
            <person name="Harris S.D."/>
            <person name="Heinekamp T."/>
            <person name="Helmstaedt K."/>
            <person name="Henrissat B."/>
            <person name="Hofmann G."/>
            <person name="Homan T."/>
            <person name="Horio T."/>
            <person name="Horiuchi H."/>
            <person name="James S."/>
            <person name="Jones M."/>
            <person name="Karaffa L."/>
            <person name="Karanyi Z."/>
            <person name="Kato M."/>
            <person name="Keller N."/>
            <person name="Kelly D.E."/>
            <person name="Kiel J.A."/>
            <person name="Kim J.M."/>
            <person name="van der Klei I.J."/>
            <person name="Klis F.M."/>
            <person name="Kovalchuk A."/>
            <person name="Krasevec N."/>
            <person name="Kubicek C.P."/>
            <person name="Liu B."/>
            <person name="Maccabe A."/>
            <person name="Meyer V."/>
            <person name="Mirabito P."/>
            <person name="Miskei M."/>
            <person name="Mos M."/>
            <person name="Mullins J."/>
            <person name="Nelson D.R."/>
            <person name="Nielsen J."/>
            <person name="Oakley B.R."/>
            <person name="Osmani S.A."/>
            <person name="Pakula T."/>
            <person name="Paszewski A."/>
            <person name="Paulsen I."/>
            <person name="Pilsyk S."/>
            <person name="Pocsi I."/>
            <person name="Punt P.J."/>
            <person name="Ram A.F."/>
            <person name="Ren Q."/>
            <person name="Robellet X."/>
            <person name="Robson G."/>
            <person name="Seiboth B."/>
            <person name="van Solingen P."/>
            <person name="Specht T."/>
            <person name="Sun J."/>
            <person name="Taheri-Talesh N."/>
            <person name="Takeshita N."/>
            <person name="Ussery D."/>
            <person name="vanKuyk P.A."/>
            <person name="Visser H."/>
            <person name="van de Vondervoort P.J."/>
            <person name="de Vries R.P."/>
            <person name="Walton J."/>
            <person name="Xiang X."/>
            <person name="Xiong Y."/>
            <person name="Zeng A.P."/>
            <person name="Brandt B.W."/>
            <person name="Cornell M.J."/>
            <person name="van den Hondel C.A."/>
            <person name="Visser J."/>
            <person name="Oliver S.G."/>
            <person name="Turner G."/>
        </authorList>
    </citation>
    <scope>GENOME REANNOTATION</scope>
    <source>
        <strain>FGSC A4 / ATCC 38163 / CBS 112.46 / NRRL 194 / M139</strain>
    </source>
</reference>
<protein>
    <recommendedName>
        <fullName>Quinate dehydrogenase</fullName>
        <ecNumber>1.1.1.24</ecNumber>
    </recommendedName>
</protein>
<name>DHQA_EMENI</name>
<accession>P25415</accession>
<accession>C8VTB0</accession>
<accession>Q5BE93</accession>
<evidence type="ECO:0000305" key="1"/>